<comment type="function">
    <text evidence="1">Catalyzes the conversion of 7,8-dihydroneopterin to 6-hydroxymethyl-7,8-dihydropterin.</text>
</comment>
<comment type="catalytic activity">
    <reaction>
        <text>7,8-dihydroneopterin = 6-hydroxymethyl-7,8-dihydropterin + glycolaldehyde</text>
        <dbReference type="Rhea" id="RHEA:10540"/>
        <dbReference type="ChEBI" id="CHEBI:17001"/>
        <dbReference type="ChEBI" id="CHEBI:17071"/>
        <dbReference type="ChEBI" id="CHEBI:44841"/>
        <dbReference type="EC" id="4.1.2.25"/>
    </reaction>
</comment>
<comment type="pathway">
    <text>Cofactor biosynthesis; tetrahydrofolate biosynthesis; 2-amino-4-hydroxy-6-hydroxymethyl-7,8-dihydropteridine diphosphate from 7,8-dihydroneopterin triphosphate: step 3/4.</text>
</comment>
<comment type="similarity">
    <text evidence="3">Belongs to the DHNA family.</text>
</comment>
<proteinExistence type="inferred from homology"/>
<keyword id="KW-0289">Folate biosynthesis</keyword>
<keyword id="KW-0456">Lyase</keyword>
<accession>Q9Z7E9</accession>
<accession>Q9JQ60</accession>
<organism>
    <name type="scientific">Chlamydia pneumoniae</name>
    <name type="common">Chlamydophila pneumoniae</name>
    <dbReference type="NCBI Taxonomy" id="83558"/>
    <lineage>
        <taxon>Bacteria</taxon>
        <taxon>Pseudomonadati</taxon>
        <taxon>Chlamydiota</taxon>
        <taxon>Chlamydiia</taxon>
        <taxon>Chlamydiales</taxon>
        <taxon>Chlamydiaceae</taxon>
        <taxon>Chlamydia/Chlamydophila group</taxon>
        <taxon>Chlamydia</taxon>
    </lineage>
</organism>
<sequence length="134" mass="15153">MIAIERYQLIISKFRMWLFLGCSVEERHFKQPVLISVTFSYNEVPSACLSDKLSDACCYLEVTSLIEEIANTKPYALIEHLANELFDSLVISFGDKASKIDLEVEKERPPVPNLLNPIKFTISKELCPSPVLSA</sequence>
<dbReference type="EC" id="4.1.2.25"/>
<dbReference type="EMBL" id="AE001363">
    <property type="protein sequence ID" value="AAD18895.1"/>
    <property type="molecule type" value="Genomic_DNA"/>
</dbReference>
<dbReference type="EMBL" id="AE002161">
    <property type="protein sequence ID" value="AAF38882.1"/>
    <property type="molecule type" value="Genomic_DNA"/>
</dbReference>
<dbReference type="EMBL" id="BA000008">
    <property type="protein sequence ID" value="BAA98965.1"/>
    <property type="molecule type" value="Genomic_DNA"/>
</dbReference>
<dbReference type="EMBL" id="AE009440">
    <property type="protein sequence ID" value="AAP98714.1"/>
    <property type="molecule type" value="Genomic_DNA"/>
</dbReference>
<dbReference type="PIR" id="C86585">
    <property type="entry name" value="C86585"/>
</dbReference>
<dbReference type="PIR" id="F72039">
    <property type="entry name" value="F72039"/>
</dbReference>
<dbReference type="RefSeq" id="NP_224952.1">
    <property type="nucleotide sequence ID" value="NC_000922.1"/>
</dbReference>
<dbReference type="RefSeq" id="WP_010883394.1">
    <property type="nucleotide sequence ID" value="NZ_LN847257.1"/>
</dbReference>
<dbReference type="SMR" id="Q9Z7E9"/>
<dbReference type="STRING" id="406984.CPK_ORF00163"/>
<dbReference type="GeneID" id="45050812"/>
<dbReference type="KEGG" id="cpa:CP_1115"/>
<dbReference type="KEGG" id="cpj:folX"/>
<dbReference type="KEGG" id="cpn:CPn_0757"/>
<dbReference type="KEGG" id="cpt:CpB0785"/>
<dbReference type="PATRIC" id="fig|115713.3.peg.834"/>
<dbReference type="eggNOG" id="COG1539">
    <property type="taxonomic scope" value="Bacteria"/>
</dbReference>
<dbReference type="HOGENOM" id="CLU_112632_3_0_0"/>
<dbReference type="OrthoDB" id="7161206at2"/>
<dbReference type="UniPathway" id="UPA00077">
    <property type="reaction ID" value="UER00154"/>
</dbReference>
<dbReference type="Proteomes" id="UP000000583">
    <property type="component" value="Chromosome"/>
</dbReference>
<dbReference type="Proteomes" id="UP000000801">
    <property type="component" value="Chromosome"/>
</dbReference>
<dbReference type="GO" id="GO:0005737">
    <property type="term" value="C:cytoplasm"/>
    <property type="evidence" value="ECO:0007669"/>
    <property type="project" value="TreeGrafter"/>
</dbReference>
<dbReference type="GO" id="GO:0004150">
    <property type="term" value="F:dihydroneopterin aldolase activity"/>
    <property type="evidence" value="ECO:0007669"/>
    <property type="project" value="UniProtKB-EC"/>
</dbReference>
<dbReference type="GO" id="GO:0046656">
    <property type="term" value="P:folic acid biosynthetic process"/>
    <property type="evidence" value="ECO:0007669"/>
    <property type="project" value="UniProtKB-KW"/>
</dbReference>
<dbReference type="GO" id="GO:0046654">
    <property type="term" value="P:tetrahydrofolate biosynthetic process"/>
    <property type="evidence" value="ECO:0007669"/>
    <property type="project" value="UniProtKB-UniPathway"/>
</dbReference>
<dbReference type="CDD" id="cd00534">
    <property type="entry name" value="DHNA_DHNTPE"/>
    <property type="match status" value="1"/>
</dbReference>
<dbReference type="Gene3D" id="3.30.1130.10">
    <property type="match status" value="1"/>
</dbReference>
<dbReference type="InterPro" id="IPR006156">
    <property type="entry name" value="Dihydroneopterin_aldolase"/>
</dbReference>
<dbReference type="InterPro" id="IPR006157">
    <property type="entry name" value="FolB_dom"/>
</dbReference>
<dbReference type="InterPro" id="IPR043133">
    <property type="entry name" value="GTP-CH-I_C/QueF"/>
</dbReference>
<dbReference type="NCBIfam" id="TIGR00525">
    <property type="entry name" value="folB"/>
    <property type="match status" value="1"/>
</dbReference>
<dbReference type="NCBIfam" id="TIGR00526">
    <property type="entry name" value="folB_dom"/>
    <property type="match status" value="1"/>
</dbReference>
<dbReference type="PANTHER" id="PTHR42844">
    <property type="entry name" value="DIHYDRONEOPTERIN ALDOLASE 1-RELATED"/>
    <property type="match status" value="1"/>
</dbReference>
<dbReference type="PANTHER" id="PTHR42844:SF1">
    <property type="entry name" value="DIHYDRONEOPTERIN ALDOLASE 1-RELATED"/>
    <property type="match status" value="1"/>
</dbReference>
<dbReference type="Pfam" id="PF02152">
    <property type="entry name" value="FolB"/>
    <property type="match status" value="1"/>
</dbReference>
<dbReference type="SMART" id="SM00905">
    <property type="entry name" value="FolB"/>
    <property type="match status" value="1"/>
</dbReference>
<dbReference type="SUPFAM" id="SSF55620">
    <property type="entry name" value="Tetrahydrobiopterin biosynthesis enzymes-like"/>
    <property type="match status" value="1"/>
</dbReference>
<name>FOLB_CHLPN</name>
<evidence type="ECO:0000250" key="1"/>
<evidence type="ECO:0000250" key="2">
    <source>
        <dbReference type="UniProtKB" id="P0AC16"/>
    </source>
</evidence>
<evidence type="ECO:0000305" key="3"/>
<gene>
    <name type="primary">folB</name>
    <name type="ordered locus">CPn_0757</name>
    <name type="ordered locus">CP_1115</name>
    <name type="ordered locus">CpB0785</name>
</gene>
<feature type="chain" id="PRO_0000168267" description="Probable dihydroneopterin aldolase">
    <location>
        <begin position="1"/>
        <end position="134"/>
    </location>
</feature>
<feature type="active site" description="Proton donor/acceptor" evidence="2">
    <location>
        <position position="106"/>
    </location>
</feature>
<feature type="binding site" evidence="2">
    <location>
        <position position="26"/>
    </location>
    <ligand>
        <name>substrate</name>
    </ligand>
</feature>
<feature type="binding site" evidence="2">
    <location>
        <position position="59"/>
    </location>
    <ligand>
        <name>substrate</name>
    </ligand>
</feature>
<feature type="binding site" evidence="2">
    <location>
        <begin position="78"/>
        <end position="79"/>
    </location>
    <ligand>
        <name>substrate</name>
    </ligand>
</feature>
<reference key="1">
    <citation type="journal article" date="1999" name="Nat. Genet.">
        <title>Comparative genomes of Chlamydia pneumoniae and C. trachomatis.</title>
        <authorList>
            <person name="Kalman S."/>
            <person name="Mitchell W.P."/>
            <person name="Marathe R."/>
            <person name="Lammel C.J."/>
            <person name="Fan J."/>
            <person name="Hyman R.W."/>
            <person name="Olinger L."/>
            <person name="Grimwood J."/>
            <person name="Davis R.W."/>
            <person name="Stephens R.S."/>
        </authorList>
    </citation>
    <scope>NUCLEOTIDE SEQUENCE [LARGE SCALE GENOMIC DNA]</scope>
    <source>
        <strain>CWL029</strain>
    </source>
</reference>
<reference key="2">
    <citation type="journal article" date="2000" name="Nucleic Acids Res.">
        <title>Genome sequences of Chlamydia trachomatis MoPn and Chlamydia pneumoniae AR39.</title>
        <authorList>
            <person name="Read T.D."/>
            <person name="Brunham R.C."/>
            <person name="Shen C."/>
            <person name="Gill S.R."/>
            <person name="Heidelberg J.F."/>
            <person name="White O."/>
            <person name="Hickey E.K."/>
            <person name="Peterson J.D."/>
            <person name="Utterback T.R."/>
            <person name="Berry K.J."/>
            <person name="Bass S."/>
            <person name="Linher K.D."/>
            <person name="Weidman J.F."/>
            <person name="Khouri H.M."/>
            <person name="Craven B."/>
            <person name="Bowman C."/>
            <person name="Dodson R.J."/>
            <person name="Gwinn M.L."/>
            <person name="Nelson W.C."/>
            <person name="DeBoy R.T."/>
            <person name="Kolonay J.F."/>
            <person name="McClarty G."/>
            <person name="Salzberg S.L."/>
            <person name="Eisen J.A."/>
            <person name="Fraser C.M."/>
        </authorList>
    </citation>
    <scope>NUCLEOTIDE SEQUENCE [LARGE SCALE GENOMIC DNA]</scope>
    <source>
        <strain>AR39</strain>
    </source>
</reference>
<reference key="3">
    <citation type="journal article" date="2000" name="Nucleic Acids Res.">
        <title>Comparison of whole genome sequences of Chlamydia pneumoniae J138 from Japan and CWL029 from USA.</title>
        <authorList>
            <person name="Shirai M."/>
            <person name="Hirakawa H."/>
            <person name="Kimoto M."/>
            <person name="Tabuchi M."/>
            <person name="Kishi F."/>
            <person name="Ouchi K."/>
            <person name="Shiba T."/>
            <person name="Ishii K."/>
            <person name="Hattori M."/>
            <person name="Kuhara S."/>
            <person name="Nakazawa T."/>
        </authorList>
    </citation>
    <scope>NUCLEOTIDE SEQUENCE [LARGE SCALE GENOMIC DNA]</scope>
    <source>
        <strain>J138</strain>
    </source>
</reference>
<reference key="4">
    <citation type="submission" date="2002-05" db="EMBL/GenBank/DDBJ databases">
        <title>The genome sequence of Chlamydia pneumoniae TW183 and comparison with other Chlamydia strains based on whole genome sequence analysis.</title>
        <authorList>
            <person name="Geng M.M."/>
            <person name="Schuhmacher A."/>
            <person name="Muehldorfer I."/>
            <person name="Bensch K.W."/>
            <person name="Schaefer K.P."/>
            <person name="Schneider S."/>
            <person name="Pohl T."/>
            <person name="Essig A."/>
            <person name="Marre R."/>
            <person name="Melchers K."/>
        </authorList>
    </citation>
    <scope>NUCLEOTIDE SEQUENCE [LARGE SCALE GENOMIC DNA]</scope>
    <source>
        <strain>TW-183</strain>
    </source>
</reference>
<protein>
    <recommendedName>
        <fullName>Probable dihydroneopterin aldolase</fullName>
        <shortName>DHNA</shortName>
        <ecNumber>4.1.2.25</ecNumber>
    </recommendedName>
    <alternativeName>
        <fullName>7,8-dihydroneopterin aldolase</fullName>
    </alternativeName>
</protein>